<proteinExistence type="evidence at protein level"/>
<name>DAPB3_PSEMX</name>
<dbReference type="EC" id="3.4.14.-" evidence="4"/>
<dbReference type="EMBL" id="AB889526">
    <property type="protein sequence ID" value="BAO18428.1"/>
    <property type="molecule type" value="Genomic_DNA"/>
</dbReference>
<dbReference type="SMR" id="V5YMB3"/>
<dbReference type="ESTHER" id="psemx-dapb3">
    <property type="family name" value="Prolyl_oligopeptidase_S9"/>
</dbReference>
<dbReference type="GO" id="GO:0004177">
    <property type="term" value="F:aminopeptidase activity"/>
    <property type="evidence" value="ECO:0007669"/>
    <property type="project" value="UniProtKB-KW"/>
</dbReference>
<dbReference type="GO" id="GO:0008239">
    <property type="term" value="F:dipeptidyl-peptidase activity"/>
    <property type="evidence" value="ECO:0000314"/>
    <property type="project" value="UniProtKB"/>
</dbReference>
<dbReference type="GO" id="GO:0004175">
    <property type="term" value="F:endopeptidase activity"/>
    <property type="evidence" value="ECO:0000314"/>
    <property type="project" value="UniProtKB"/>
</dbReference>
<dbReference type="GO" id="GO:0004252">
    <property type="term" value="F:serine-type endopeptidase activity"/>
    <property type="evidence" value="ECO:0007669"/>
    <property type="project" value="TreeGrafter"/>
</dbReference>
<dbReference type="GO" id="GO:0051603">
    <property type="term" value="P:proteolysis involved in protein catabolic process"/>
    <property type="evidence" value="ECO:0000314"/>
    <property type="project" value="UniProtKB"/>
</dbReference>
<dbReference type="FunFam" id="3.40.50.1820:FF:000442">
    <property type="entry name" value="Subfamily S9C unassigned peptidase"/>
    <property type="match status" value="1"/>
</dbReference>
<dbReference type="Gene3D" id="3.40.50.1820">
    <property type="entry name" value="alpha/beta hydrolase"/>
    <property type="match status" value="1"/>
</dbReference>
<dbReference type="Gene3D" id="2.120.10.30">
    <property type="entry name" value="TolB, C-terminal domain"/>
    <property type="match status" value="1"/>
</dbReference>
<dbReference type="InterPro" id="IPR011042">
    <property type="entry name" value="6-blade_b-propeller_TolB-like"/>
</dbReference>
<dbReference type="InterPro" id="IPR029058">
    <property type="entry name" value="AB_hydrolase_fold"/>
</dbReference>
<dbReference type="InterPro" id="IPR001375">
    <property type="entry name" value="Peptidase_S9_cat"/>
</dbReference>
<dbReference type="PANTHER" id="PTHR42776:SF27">
    <property type="entry name" value="DIPEPTIDYL PEPTIDASE FAMILY MEMBER 6"/>
    <property type="match status" value="1"/>
</dbReference>
<dbReference type="PANTHER" id="PTHR42776">
    <property type="entry name" value="SERINE PEPTIDASE S9 FAMILY MEMBER"/>
    <property type="match status" value="1"/>
</dbReference>
<dbReference type="Pfam" id="PF00326">
    <property type="entry name" value="Peptidase_S9"/>
    <property type="match status" value="1"/>
</dbReference>
<dbReference type="SUPFAM" id="SSF53474">
    <property type="entry name" value="alpha/beta-Hydrolases"/>
    <property type="match status" value="1"/>
</dbReference>
<dbReference type="SUPFAM" id="SSF82171">
    <property type="entry name" value="DPP6 N-terminal domain-like"/>
    <property type="match status" value="1"/>
</dbReference>
<gene>
    <name evidence="7" type="primary">dapb3</name>
</gene>
<comment type="function">
    <text evidence="4">Exopeptidase that catalyzes the removal of dipeptide units (NH2-P2-P1- or -P1'-P2'-COOH) from the free amino or carboxy termini. Prefers substrates composed of bulky, hydrophobic amino acids at P1 and P1' positions. Has endopeptidase activity on N-terminally blocked peptide derivatives which contain aromatic amino acid residue at the P1 position. Exopeptidase activity is much higher than its endopeptidase activity.</text>
</comment>
<comment type="activity regulation">
    <text evidence="4">Strongly inhibited by the serine protease inhibitor diisopropyl fluorophosphate (DFP), chymostatin, leupeptin, 0.5 mM ZnCl(2), 10 mM o-phenanthlorine and N-tosyl-L-phenyl-alanyl chloromethyl ketone (TPCK), but not by N-tosyl-L-lysyl chloromethyl ketone (TLCK). Activity is not affected significantly by iodoacetate (IAA), L-trans-epoxysuccinyl-leucylamido(4-guanido)butane (E64), pepstatin A and phenylmethanesulfonyl fluoride (PMSF). Activity is stimulated by addition of 0.5 mM CaCl(2), 10 mM EDTA and N-ethylmaleimide (NEM).</text>
</comment>
<comment type="biophysicochemical properties">
    <kinetics>
        <KM evidence="4">0.33 mM for Gly-Phe-pNA (at pH 9 and 37 degrees Celsius)</KM>
        <KM evidence="4">1 mM for Gly-Phe-beta-naphthylamine (at pH 9 and 37 degrees Celsius)</KM>
        <Vmax evidence="4">9.6 umol/min/mg enzyme with Gly-Phe-pNA as substrate (at pH 9 and 37 degrees Celsius)</Vmax>
        <Vmax evidence="4">330.0 umol/min/mg enzyme with Gly-Phe-beta-naphthylamine as substrate (at pH 9 and 37 degrees Celsius)</Vmax>
    </kinetics>
    <phDependence>
        <text evidence="4">Optimum pH is 8.5 to 9.0 for the hydrolysis of Gly-Phe-pNA.</text>
    </phDependence>
    <temperatureDependence>
        <text evidence="4">Optimum temperature is between 35 and 40 degrees Celsius for the hydrolysis of Gly-Phe-pNA. Stable at a temperature below 20 degrees Celsius for 30 minutes.</text>
    </temperatureDependence>
</comment>
<comment type="subunit">
    <text evidence="4">Monomer.</text>
</comment>
<comment type="similarity">
    <text evidence="6">Belongs to the peptidase S9C family.</text>
</comment>
<sequence>MRHPAFRLTLLASTVAFALAPQAAQAAPSAADRIAGTELIARDALFGNPERANVQISPDGKYLSWVAAVDGVLNVWIAPADNPSQARAVTQDTARGIRSYFWSYQPDTLLYLRDSGGDEDFHLYAVDLKTGQAKDLTPFPKTTAQVAGVSPKHPGTILVGMNDRDAQWHDIYKVDLASGNRTLLEKNDAQIAGYIADADYTLKYAQRSRPDGGADVLRRGANGAWEKFDDIPFEDVLTTSPGGLTLDGKTLYFTDSRGRNTAALFAIDVASGKRTLVLEDARADVGGTLADPATGKVQAVSVDYLRDEWKVVDPAIRADLEKLEAIGPGDVSVNTRTLDDKTWIVAYSAAEAPLVYYRYDRSAGTLTKLFSARPKLEGKPLVPQWPVEIASRDNKTLVSYLTLPRSADANNDGKADAPVPLVLLVHGGPWARDSYGYGGYNQWLANRGYAVLSVNFRGSTGFGKDFTNAGNGEWAGKMHDDLIDAVQWAVKQGVTTQDQVAIMGGSYGGYATLTGLTFTPDAFACGVDIVGPSNLNTLLSTVPPYWASFFEQLAKRMGDPRTDAGKKWLTERSPLTRADQIKKPLLIGQGANDPRVKQAESDQIVKAMQAKNIPVTYVLFPDEGHGFARPENNKAFNAVTEGFLAQCLGGRAEPIGKDFTGSSISVPVGADGVPGLAEALKGHTQEVKK</sequence>
<protein>
    <recommendedName>
        <fullName evidence="7">Dipeptidyl aminopeptidase BIII</fullName>
        <shortName evidence="5">DAP BIII</shortName>
        <ecNumber evidence="4">3.4.14.-</ecNumber>
    </recommendedName>
</protein>
<keyword id="KW-0031">Aminopeptidase</keyword>
<keyword id="KW-0378">Hydrolase</keyword>
<keyword id="KW-0645">Protease</keyword>
<keyword id="KW-0720">Serine protease</keyword>
<keyword id="KW-0732">Signal</keyword>
<reference evidence="7" key="1">
    <citation type="submission" date="2013-11" db="EMBL/GenBank/DDBJ databases">
        <authorList>
            <person name="Suzuki Y."/>
            <person name="Ogasawara W."/>
        </authorList>
    </citation>
    <scope>NUCLEOTIDE SEQUENCE [GENOMIC DNA]</scope>
    <source>
        <strain evidence="7">WO24</strain>
    </source>
</reference>
<reference key="2">
    <citation type="journal article" date="1996" name="J. Bacteriol.">
        <title>Two types of novel dipeptidyl aminopeptidases from Pseudomonas sp. strain WO24.</title>
        <authorList>
            <person name="Ogasawara W."/>
            <person name="Kobayashi G."/>
            <person name="Okada H."/>
            <person name="Morikawa Y."/>
        </authorList>
    </citation>
    <scope>FUNCTION</scope>
    <scope>CATALYTIC ACTIVITY</scope>
    <scope>ACTIVITY REGULATION</scope>
    <scope>BIOPHYSICOCHEMICAL PROPERTIES</scope>
    <scope>SUBSTRATE SPECIFICITY</scope>
    <scope>SUBUNIT</scope>
    <source>
        <strain evidence="5">WO24</strain>
    </source>
</reference>
<evidence type="ECO:0000250" key="1">
    <source>
        <dbReference type="UniProtKB" id="P13798"/>
    </source>
</evidence>
<evidence type="ECO:0000255" key="2"/>
<evidence type="ECO:0000255" key="3">
    <source>
        <dbReference type="PROSITE-ProRule" id="PRU10084"/>
    </source>
</evidence>
<evidence type="ECO:0000269" key="4">
    <source>
    </source>
</evidence>
<evidence type="ECO:0000303" key="5">
    <source>
    </source>
</evidence>
<evidence type="ECO:0000305" key="6"/>
<evidence type="ECO:0000312" key="7">
    <source>
        <dbReference type="EMBL" id="BAO18428.1"/>
    </source>
</evidence>
<accession>V5YMB3</accession>
<feature type="signal peptide" evidence="2">
    <location>
        <begin position="1"/>
        <end position="26"/>
    </location>
</feature>
<feature type="chain" id="PRO_0000433468" description="Dipeptidyl aminopeptidase BIII">
    <location>
        <begin position="27"/>
        <end position="689"/>
    </location>
</feature>
<feature type="active site" description="Charge relay system" evidence="1 3">
    <location>
        <position position="506"/>
    </location>
</feature>
<feature type="active site" description="Charge relay system" evidence="3">
    <location>
        <position position="593"/>
    </location>
</feature>
<feature type="active site" description="Charge relay system" evidence="1 3">
    <location>
        <position position="625"/>
    </location>
</feature>
<organism>
    <name type="scientific">Pseudoxanthomonas mexicana</name>
    <dbReference type="NCBI Taxonomy" id="128785"/>
    <lineage>
        <taxon>Bacteria</taxon>
        <taxon>Pseudomonadati</taxon>
        <taxon>Pseudomonadota</taxon>
        <taxon>Gammaproteobacteria</taxon>
        <taxon>Lysobacterales</taxon>
        <taxon>Lysobacteraceae</taxon>
        <taxon>Pseudoxanthomonas</taxon>
    </lineage>
</organism>